<gene>
    <name type="primary">Syt9</name>
    <name type="synonym">Syt5</name>
</gene>
<accession>Q925C0</accession>
<accession>Q62748</accession>
<feature type="chain" id="PRO_0000183964" description="Synaptotagmin-9">
    <location>
        <begin position="1"/>
        <end position="491"/>
    </location>
</feature>
<feature type="topological domain" description="Vesicular" evidence="4">
    <location>
        <begin position="1"/>
        <end position="52"/>
    </location>
</feature>
<feature type="transmembrane region" description="Helical" evidence="4">
    <location>
        <begin position="53"/>
        <end position="73"/>
    </location>
</feature>
<feature type="topological domain" description="Cytoplasmic" evidence="4">
    <location>
        <begin position="74"/>
        <end position="491"/>
    </location>
</feature>
<feature type="domain" description="C2 1" evidence="5">
    <location>
        <begin position="220"/>
        <end position="341"/>
    </location>
</feature>
<feature type="domain" description="C2 2" evidence="5">
    <location>
        <begin position="352"/>
        <end position="485"/>
    </location>
</feature>
<feature type="region of interest" description="Cysteine motif" evidence="1">
    <location>
        <begin position="9"/>
        <end position="31"/>
    </location>
</feature>
<feature type="region of interest" description="Disordered" evidence="6">
    <location>
        <begin position="91"/>
        <end position="147"/>
    </location>
</feature>
<feature type="compositionally biased region" description="Polar residues" evidence="6">
    <location>
        <begin position="91"/>
        <end position="104"/>
    </location>
</feature>
<feature type="compositionally biased region" description="Acidic residues" evidence="6">
    <location>
        <begin position="105"/>
        <end position="116"/>
    </location>
</feature>
<feature type="compositionally biased region" description="Polar residues" evidence="6">
    <location>
        <begin position="127"/>
        <end position="144"/>
    </location>
</feature>
<feature type="binding site" evidence="5">
    <location>
        <position position="251"/>
    </location>
    <ligand>
        <name>Ca(2+)</name>
        <dbReference type="ChEBI" id="CHEBI:29108"/>
        <label>1</label>
    </ligand>
</feature>
<feature type="binding site" evidence="5">
    <location>
        <position position="251"/>
    </location>
    <ligand>
        <name>Ca(2+)</name>
        <dbReference type="ChEBI" id="CHEBI:29108"/>
        <label>2</label>
    </ligand>
</feature>
<feature type="binding site" evidence="5">
    <location>
        <position position="257"/>
    </location>
    <ligand>
        <name>Ca(2+)</name>
        <dbReference type="ChEBI" id="CHEBI:29108"/>
        <label>1</label>
    </ligand>
</feature>
<feature type="binding site" evidence="5">
    <location>
        <position position="309"/>
    </location>
    <ligand>
        <name>Ca(2+)</name>
        <dbReference type="ChEBI" id="CHEBI:29108"/>
        <label>1</label>
    </ligand>
</feature>
<feature type="binding site" evidence="5">
    <location>
        <position position="309"/>
    </location>
    <ligand>
        <name>Ca(2+)</name>
        <dbReference type="ChEBI" id="CHEBI:29108"/>
        <label>2</label>
    </ligand>
</feature>
<feature type="binding site" evidence="5">
    <location>
        <position position="310"/>
    </location>
    <ligand>
        <name>Ca(2+)</name>
        <dbReference type="ChEBI" id="CHEBI:29108"/>
        <label>1</label>
    </ligand>
</feature>
<feature type="binding site" evidence="5">
    <location>
        <position position="311"/>
    </location>
    <ligand>
        <name>Ca(2+)</name>
        <dbReference type="ChEBI" id="CHEBI:29108"/>
        <label>1</label>
    </ligand>
</feature>
<feature type="binding site" evidence="5">
    <location>
        <position position="311"/>
    </location>
    <ligand>
        <name>Ca(2+)</name>
        <dbReference type="ChEBI" id="CHEBI:29108"/>
        <label>2</label>
    </ligand>
</feature>
<feature type="binding site" evidence="5">
    <location>
        <position position="311"/>
    </location>
    <ligand>
        <name>Ca(2+)</name>
        <dbReference type="ChEBI" id="CHEBI:29108"/>
        <label>3</label>
    </ligand>
</feature>
<feature type="binding site" evidence="5">
    <location>
        <position position="314"/>
    </location>
    <ligand>
        <name>Ca(2+)</name>
        <dbReference type="ChEBI" id="CHEBI:29108"/>
        <label>3</label>
    </ligand>
</feature>
<feature type="binding site" evidence="5">
    <location>
        <position position="317"/>
    </location>
    <ligand>
        <name>Ca(2+)</name>
        <dbReference type="ChEBI" id="CHEBI:29108"/>
        <label>2</label>
    </ligand>
</feature>
<feature type="binding site" evidence="5">
    <location>
        <position position="317"/>
    </location>
    <ligand>
        <name>Ca(2+)</name>
        <dbReference type="ChEBI" id="CHEBI:29108"/>
        <label>3</label>
    </ligand>
</feature>
<feature type="binding site" evidence="5">
    <location>
        <position position="383"/>
    </location>
    <ligand>
        <name>Ca(2+)</name>
        <dbReference type="ChEBI" id="CHEBI:29108"/>
        <label>4</label>
    </ligand>
</feature>
<feature type="binding site" evidence="5">
    <location>
        <position position="389"/>
    </location>
    <ligand>
        <name>Ca(2+)</name>
        <dbReference type="ChEBI" id="CHEBI:29108"/>
        <label>4</label>
    </ligand>
</feature>
<feature type="binding site" evidence="5">
    <location>
        <position position="443"/>
    </location>
    <ligand>
        <name>Ca(2+)</name>
        <dbReference type="ChEBI" id="CHEBI:29108"/>
        <label>4</label>
    </ligand>
</feature>
<feature type="binding site" evidence="5">
    <location>
        <position position="445"/>
    </location>
    <ligand>
        <name>Ca(2+)</name>
        <dbReference type="ChEBI" id="CHEBI:29108"/>
        <label>4</label>
    </ligand>
</feature>
<feature type="modified residue" description="Phosphoserine" evidence="9">
    <location>
        <position position="177"/>
    </location>
</feature>
<comment type="function">
    <text>May be involved in Ca(2+)-dependent exocytosis of secretory vesicles through Ca(2+) and phospholipid binding to the C2 domain or may serve as Ca(2+) sensors in the process of vesicular trafficking and exocytosis.</text>
</comment>
<comment type="cofactor">
    <cofactor evidence="5 7">
        <name>Ca(2+)</name>
        <dbReference type="ChEBI" id="CHEBI:29108"/>
    </cofactor>
    <text evidence="2">Binds 3 Ca(2+) ions per subunit. The ions are bound to the C2 domains.</text>
</comment>
<comment type="subunit">
    <text evidence="3">Homodimer; disulfide-linked via the cysteine motif. Can also form heterodimers with SYT3, SYT6, SYT7 and SYT10.</text>
</comment>
<comment type="subcellular location">
    <subcellularLocation>
        <location>Cytoplasmic vesicle</location>
        <location>Secretory vesicle</location>
        <location>Synaptic vesicle membrane</location>
        <topology>Single-pass membrane protein</topology>
    </subcellularLocation>
</comment>
<comment type="domain">
    <text evidence="1">The cysteine motif mediates homo- or heterodimer formation via formation of disulfide bonds.</text>
</comment>
<comment type="similarity">
    <text evidence="8">Belongs to the synaptotagmin family.</text>
</comment>
<protein>
    <recommendedName>
        <fullName>Synaptotagmin-9</fullName>
    </recommendedName>
    <alternativeName>
        <fullName>Synaptotagmin 5</fullName>
    </alternativeName>
    <alternativeName>
        <fullName>Synaptotagmin IX</fullName>
        <shortName>SytIX</shortName>
    </alternativeName>
    <alternativeName>
        <fullName>Synaptotagmin V</fullName>
    </alternativeName>
</protein>
<reference key="1">
    <citation type="submission" date="2001-05" db="EMBL/GenBank/DDBJ databases">
        <authorList>
            <person name="Shin O.-H."/>
            <person name="Suedhof T.C."/>
        </authorList>
    </citation>
    <scope>NUCLEOTIDE SEQUENCE [MRNA]</scope>
</reference>
<reference key="2">
    <citation type="journal article" date="1995" name="Nature">
        <title>Ca(2+)-dependent and -independent activities of neural and non-neural synaptotagmins.</title>
        <authorList>
            <person name="Li C."/>
            <person name="Ullrich B."/>
            <person name="Zhang J.Z."/>
            <person name="Anderson R.G.W."/>
            <person name="Brose N."/>
            <person name="Suedhof T.C."/>
        </authorList>
    </citation>
    <scope>NUCLEOTIDE SEQUENCE [MRNA] OF 213-491</scope>
</reference>
<reference key="3">
    <citation type="journal article" date="2002" name="EMBO J.">
        <title>Synaptotagmins form a hierarchy of exocytotic Ca(2+) sensors with distinct Ca(2+) affinities.</title>
        <authorList>
            <person name="Sugita S."/>
            <person name="Shin O.H."/>
            <person name="Han W."/>
            <person name="Lao Y."/>
            <person name="Suedhof T.C."/>
        </authorList>
    </citation>
    <scope>COFACTOR</scope>
</reference>
<reference key="4">
    <citation type="journal article" date="2012" name="Nat. Commun.">
        <title>Quantitative maps of protein phosphorylation sites across 14 different rat organs and tissues.</title>
        <authorList>
            <person name="Lundby A."/>
            <person name="Secher A."/>
            <person name="Lage K."/>
            <person name="Nordsborg N.B."/>
            <person name="Dmytriyev A."/>
            <person name="Lundby C."/>
            <person name="Olsen J.V."/>
        </authorList>
    </citation>
    <scope>PHOSPHORYLATION [LARGE SCALE ANALYSIS] AT SER-177</scope>
    <scope>IDENTIFICATION BY MASS SPECTROMETRY [LARGE SCALE ANALYSIS]</scope>
</reference>
<dbReference type="EMBL" id="AF375461">
    <property type="protein sequence ID" value="AAK56956.1"/>
    <property type="molecule type" value="mRNA"/>
</dbReference>
<dbReference type="EMBL" id="U20108">
    <property type="protein sequence ID" value="AAA87726.1"/>
    <property type="molecule type" value="mRNA"/>
</dbReference>
<dbReference type="PIR" id="S58402">
    <property type="entry name" value="S58402"/>
</dbReference>
<dbReference type="RefSeq" id="NP_445776.1">
    <property type="nucleotide sequence ID" value="NM_053324.1"/>
</dbReference>
<dbReference type="SMR" id="Q925C0"/>
<dbReference type="FunCoup" id="Q925C0">
    <property type="interactions" value="1260"/>
</dbReference>
<dbReference type="IntAct" id="Q925C0">
    <property type="interactions" value="3"/>
</dbReference>
<dbReference type="MINT" id="Q925C0"/>
<dbReference type="STRING" id="10116.ENSRNOP00000026607"/>
<dbReference type="GlyGen" id="Q925C0">
    <property type="glycosylation" value="1 site"/>
</dbReference>
<dbReference type="iPTMnet" id="Q925C0"/>
<dbReference type="PhosphoSitePlus" id="Q925C0"/>
<dbReference type="PaxDb" id="10116-ENSRNOP00000026607"/>
<dbReference type="ABCD" id="Q925C0">
    <property type="antibodies" value="1 sequenced antibody"/>
</dbReference>
<dbReference type="GeneID" id="60564"/>
<dbReference type="KEGG" id="rno:60564"/>
<dbReference type="UCSC" id="RGD:621169">
    <property type="organism name" value="rat"/>
</dbReference>
<dbReference type="AGR" id="RGD:621169"/>
<dbReference type="CTD" id="143425"/>
<dbReference type="RGD" id="621169">
    <property type="gene designation" value="Syt9"/>
</dbReference>
<dbReference type="VEuPathDB" id="HostDB:ENSRNOG00000019613"/>
<dbReference type="eggNOG" id="KOG1028">
    <property type="taxonomic scope" value="Eukaryota"/>
</dbReference>
<dbReference type="HOGENOM" id="CLU_023008_8_3_1"/>
<dbReference type="InParanoid" id="Q925C0"/>
<dbReference type="PhylomeDB" id="Q925C0"/>
<dbReference type="TreeFam" id="TF315600"/>
<dbReference type="Reactome" id="R-RNO-8856825">
    <property type="pathway name" value="Cargo recognition for clathrin-mediated endocytosis"/>
</dbReference>
<dbReference type="Reactome" id="R-RNO-8856828">
    <property type="pathway name" value="Clathrin-mediated endocytosis"/>
</dbReference>
<dbReference type="PRO" id="PR:Q925C0"/>
<dbReference type="Proteomes" id="UP000002494">
    <property type="component" value="Chromosome 1"/>
</dbReference>
<dbReference type="Bgee" id="ENSRNOG00000019613">
    <property type="expression patterns" value="Expressed in cerebellum and 15 other cell types or tissues"/>
</dbReference>
<dbReference type="GO" id="GO:0031045">
    <property type="term" value="C:dense core granule"/>
    <property type="evidence" value="ECO:0000314"/>
    <property type="project" value="RGD"/>
</dbReference>
<dbReference type="GO" id="GO:0070382">
    <property type="term" value="C:exocytic vesicle"/>
    <property type="evidence" value="ECO:0000318"/>
    <property type="project" value="GO_Central"/>
</dbReference>
<dbReference type="GO" id="GO:0098686">
    <property type="term" value="C:hippocampal mossy fiber to CA3 synapse"/>
    <property type="evidence" value="ECO:0000266"/>
    <property type="project" value="RGD"/>
</dbReference>
<dbReference type="GO" id="GO:0005886">
    <property type="term" value="C:plasma membrane"/>
    <property type="evidence" value="ECO:0000318"/>
    <property type="project" value="GO_Central"/>
</dbReference>
<dbReference type="GO" id="GO:0030141">
    <property type="term" value="C:secretory granule"/>
    <property type="evidence" value="ECO:0000314"/>
    <property type="project" value="RGD"/>
</dbReference>
<dbReference type="GO" id="GO:0030672">
    <property type="term" value="C:synaptic vesicle membrane"/>
    <property type="evidence" value="ECO:0000266"/>
    <property type="project" value="RGD"/>
</dbReference>
<dbReference type="GO" id="GO:0061891">
    <property type="term" value="F:calcium ion sensor activity"/>
    <property type="evidence" value="ECO:0000318"/>
    <property type="project" value="GO_Central"/>
</dbReference>
<dbReference type="GO" id="GO:0005544">
    <property type="term" value="F:calcium-dependent phospholipid binding"/>
    <property type="evidence" value="ECO:0000318"/>
    <property type="project" value="GO_Central"/>
</dbReference>
<dbReference type="GO" id="GO:0042802">
    <property type="term" value="F:identical protein binding"/>
    <property type="evidence" value="ECO:0000266"/>
    <property type="project" value="RGD"/>
</dbReference>
<dbReference type="GO" id="GO:0046872">
    <property type="term" value="F:metal ion binding"/>
    <property type="evidence" value="ECO:0007669"/>
    <property type="project" value="UniProtKB-KW"/>
</dbReference>
<dbReference type="GO" id="GO:0005546">
    <property type="term" value="F:phosphatidylinositol-4,5-bisphosphate binding"/>
    <property type="evidence" value="ECO:0000266"/>
    <property type="project" value="RGD"/>
</dbReference>
<dbReference type="GO" id="GO:0001786">
    <property type="term" value="F:phosphatidylserine binding"/>
    <property type="evidence" value="ECO:0000266"/>
    <property type="project" value="RGD"/>
</dbReference>
<dbReference type="GO" id="GO:0000149">
    <property type="term" value="F:SNARE binding"/>
    <property type="evidence" value="ECO:0000266"/>
    <property type="project" value="RGD"/>
</dbReference>
<dbReference type="GO" id="GO:0099502">
    <property type="term" value="P:calcium-dependent activation of synaptic vesicle fusion"/>
    <property type="evidence" value="ECO:0000266"/>
    <property type="project" value="RGD"/>
</dbReference>
<dbReference type="GO" id="GO:0007268">
    <property type="term" value="P:chemical synaptic transmission"/>
    <property type="evidence" value="ECO:0000318"/>
    <property type="project" value="GO_Central"/>
</dbReference>
<dbReference type="GO" id="GO:0005513">
    <property type="term" value="P:detection of calcium ion"/>
    <property type="evidence" value="ECO:0000305"/>
    <property type="project" value="RGD"/>
</dbReference>
<dbReference type="GO" id="GO:0045956">
    <property type="term" value="P:positive regulation of calcium ion-dependent exocytosis"/>
    <property type="evidence" value="ECO:0000314"/>
    <property type="project" value="RGD"/>
</dbReference>
<dbReference type="GO" id="GO:0031340">
    <property type="term" value="P:positive regulation of vesicle fusion"/>
    <property type="evidence" value="ECO:0000318"/>
    <property type="project" value="GO_Central"/>
</dbReference>
<dbReference type="GO" id="GO:0017158">
    <property type="term" value="P:regulation of calcium ion-dependent exocytosis"/>
    <property type="evidence" value="ECO:0000315"/>
    <property type="project" value="RGD"/>
</dbReference>
<dbReference type="GO" id="GO:0050796">
    <property type="term" value="P:regulation of insulin secretion"/>
    <property type="evidence" value="ECO:0000315"/>
    <property type="project" value="RGD"/>
</dbReference>
<dbReference type="GO" id="GO:0016192">
    <property type="term" value="P:vesicle-mediated transport"/>
    <property type="evidence" value="ECO:0000318"/>
    <property type="project" value="GO_Central"/>
</dbReference>
<dbReference type="CDD" id="cd08403">
    <property type="entry name" value="C2B_Synaptotagmin-3-5-6-9-10"/>
    <property type="match status" value="1"/>
</dbReference>
<dbReference type="FunFam" id="2.60.40.150:FF:000005">
    <property type="entry name" value="Synaptotagmin 6"/>
    <property type="match status" value="1"/>
</dbReference>
<dbReference type="FunFam" id="2.60.40.150:FF:000011">
    <property type="entry name" value="Synaptotagmin 6"/>
    <property type="match status" value="1"/>
</dbReference>
<dbReference type="Gene3D" id="2.60.40.150">
    <property type="entry name" value="C2 domain"/>
    <property type="match status" value="2"/>
</dbReference>
<dbReference type="InterPro" id="IPR000008">
    <property type="entry name" value="C2_dom"/>
</dbReference>
<dbReference type="InterPro" id="IPR035892">
    <property type="entry name" value="C2_domain_sf"/>
</dbReference>
<dbReference type="InterPro" id="IPR001565">
    <property type="entry name" value="Synaptotagmin"/>
</dbReference>
<dbReference type="PANTHER" id="PTHR10024">
    <property type="entry name" value="SYNAPTOTAGMIN"/>
    <property type="match status" value="1"/>
</dbReference>
<dbReference type="PANTHER" id="PTHR10024:SF180">
    <property type="entry name" value="SYNAPTOTAGMIN-9"/>
    <property type="match status" value="1"/>
</dbReference>
<dbReference type="Pfam" id="PF00168">
    <property type="entry name" value="C2"/>
    <property type="match status" value="2"/>
</dbReference>
<dbReference type="PRINTS" id="PR00360">
    <property type="entry name" value="C2DOMAIN"/>
</dbReference>
<dbReference type="PRINTS" id="PR00399">
    <property type="entry name" value="SYNAPTOTAGMN"/>
</dbReference>
<dbReference type="SMART" id="SM00239">
    <property type="entry name" value="C2"/>
    <property type="match status" value="2"/>
</dbReference>
<dbReference type="SUPFAM" id="SSF49562">
    <property type="entry name" value="C2 domain (Calcium/lipid-binding domain, CaLB)"/>
    <property type="match status" value="2"/>
</dbReference>
<dbReference type="PROSITE" id="PS50004">
    <property type="entry name" value="C2"/>
    <property type="match status" value="2"/>
</dbReference>
<proteinExistence type="evidence at protein level"/>
<sequence>MPGARDALCHQALQLLAELCARGALEHDSCQDFIYHLRDRARPRLRDPDISVSLLTLVVTACGLALFGVSLFVSWKLCWVPWRERGLFSGSKDNNQEPLNYTDTETNEQENSEDFLDPPTPCPDSSMKISHTSPDIPLSTQPGGQDNCAHAVRVQRQVTEPTPSARHNSIRRQLNLSNPDFNIQQLQRQEQLTGIGRIKPELYKQRSLDNDDGRRSNSKACGKLNFILKYDCDLEQLIVKIHKAVNLPAKDFSGTSDPYVKIYLLPDRKTKHQTKVHRKTLNPVFDEVFLFPVHYNDLEARKLHFSVYDFDRFSRHDLIGQVVVDHFFDLADFPRECILWKDIEYVTNDNVDLGELMFSLCYLPTAGRLTITIIKARNLKAMDITGASDPYVKVSLMCDGRRLKKRKTSTKRNTLNPVYNEAIVFDVPPESIDQIHLSIAVMDYDRVGHNEVIGVCQVGNEAERLGRDHWSEMLSYPRKPIAHWHSLLEKR</sequence>
<organism>
    <name type="scientific">Rattus norvegicus</name>
    <name type="common">Rat</name>
    <dbReference type="NCBI Taxonomy" id="10116"/>
    <lineage>
        <taxon>Eukaryota</taxon>
        <taxon>Metazoa</taxon>
        <taxon>Chordata</taxon>
        <taxon>Craniata</taxon>
        <taxon>Vertebrata</taxon>
        <taxon>Euteleostomi</taxon>
        <taxon>Mammalia</taxon>
        <taxon>Eutheria</taxon>
        <taxon>Euarchontoglires</taxon>
        <taxon>Glires</taxon>
        <taxon>Rodentia</taxon>
        <taxon>Myomorpha</taxon>
        <taxon>Muroidea</taxon>
        <taxon>Muridae</taxon>
        <taxon>Murinae</taxon>
        <taxon>Rattus</taxon>
    </lineage>
</organism>
<evidence type="ECO:0000250" key="1">
    <source>
        <dbReference type="UniProtKB" id="O35681"/>
    </source>
</evidence>
<evidence type="ECO:0000250" key="2">
    <source>
        <dbReference type="UniProtKB" id="P40748"/>
    </source>
</evidence>
<evidence type="ECO:0000250" key="3">
    <source>
        <dbReference type="UniProtKB" id="Q9R0N9"/>
    </source>
</evidence>
<evidence type="ECO:0000255" key="4"/>
<evidence type="ECO:0000255" key="5">
    <source>
        <dbReference type="PROSITE-ProRule" id="PRU00041"/>
    </source>
</evidence>
<evidence type="ECO:0000256" key="6">
    <source>
        <dbReference type="SAM" id="MobiDB-lite"/>
    </source>
</evidence>
<evidence type="ECO:0000269" key="7">
    <source>
    </source>
</evidence>
<evidence type="ECO:0000305" key="8"/>
<evidence type="ECO:0007744" key="9">
    <source>
    </source>
</evidence>
<keyword id="KW-0106">Calcium</keyword>
<keyword id="KW-0968">Cytoplasmic vesicle</keyword>
<keyword id="KW-1015">Disulfide bond</keyword>
<keyword id="KW-0472">Membrane</keyword>
<keyword id="KW-0479">Metal-binding</keyword>
<keyword id="KW-0597">Phosphoprotein</keyword>
<keyword id="KW-1185">Reference proteome</keyword>
<keyword id="KW-0677">Repeat</keyword>
<keyword id="KW-0770">Synapse</keyword>
<keyword id="KW-0812">Transmembrane</keyword>
<keyword id="KW-1133">Transmembrane helix</keyword>
<name>SYT9_RAT</name>